<name>RS4_CAEEL</name>
<keyword id="KW-0002">3D-structure</keyword>
<keyword id="KW-0903">Direct protein sequencing</keyword>
<keyword id="KW-1185">Reference proteome</keyword>
<keyword id="KW-0687">Ribonucleoprotein</keyword>
<keyword id="KW-0689">Ribosomal protein</keyword>
<keyword id="KW-0694">RNA-binding</keyword>
<keyword id="KW-0699">rRNA-binding</keyword>
<comment type="similarity">
    <text evidence="1">Belongs to the eukaryotic ribosomal protein eS4 family.</text>
</comment>
<gene>
    <name type="primary">rps-4</name>
    <name type="ORF">Y43B11AR.4</name>
</gene>
<sequence>MRGPKKHLKRLAAPSHWMLDKLGGVFAVRPNPGPHKLRESLPLSLFLRNRLKYALNYTEAKKILTQRVVRVDGKVRTCHKFPTGFMDVVAIERTNEYFRMLYDTKGRYVVHRIQAAEADFKLCKVKSVRTVNKGVPVLTTTDGRTIRYPDPHVKVNDTIVFNISTQKITDSVKFEPGNLAYVTGGRNVGRVGIIGHRERLPGASDIIHIKDSAGHSFATRISNVFVIGKGNKALVSLPTGAGIRLSIAEERDKRMAQKH</sequence>
<proteinExistence type="evidence at protein level"/>
<dbReference type="EMBL" id="FO081794">
    <property type="protein sequence ID" value="CCD74049.1"/>
    <property type="molecule type" value="Genomic_DNA"/>
</dbReference>
<dbReference type="RefSeq" id="NP_501103.1">
    <property type="nucleotide sequence ID" value="NM_068702.8"/>
</dbReference>
<dbReference type="PDB" id="9BH5">
    <property type="method" value="EM"/>
    <property type="resolution" value="2.63 A"/>
    <property type="chains" value="AE=1-259"/>
</dbReference>
<dbReference type="PDB" id="9CAI">
    <property type="method" value="EM"/>
    <property type="resolution" value="2.59 A"/>
    <property type="chains" value="AE=1-259"/>
</dbReference>
<dbReference type="PDBsum" id="9BH5"/>
<dbReference type="PDBsum" id="9CAI"/>
<dbReference type="EMDB" id="EMD-44533"/>
<dbReference type="EMDB" id="EMD-45392"/>
<dbReference type="SMR" id="Q9N3X2"/>
<dbReference type="BioGRID" id="42600">
    <property type="interactions" value="97"/>
</dbReference>
<dbReference type="DIP" id="DIP-24988N"/>
<dbReference type="FunCoup" id="Q9N3X2">
    <property type="interactions" value="1379"/>
</dbReference>
<dbReference type="IntAct" id="Q9N3X2">
    <property type="interactions" value="2"/>
</dbReference>
<dbReference type="STRING" id="6239.Y43B11AR.4.1"/>
<dbReference type="iPTMnet" id="Q9N3X2"/>
<dbReference type="PaxDb" id="6239-Y43B11AR.4"/>
<dbReference type="PeptideAtlas" id="Q9N3X2"/>
<dbReference type="EnsemblMetazoa" id="Y43B11AR.4.1">
    <property type="protein sequence ID" value="Y43B11AR.4.1"/>
    <property type="gene ID" value="WBGene00004473"/>
</dbReference>
<dbReference type="GeneID" id="177481"/>
<dbReference type="KEGG" id="cel:CELE_Y43B11AR.4"/>
<dbReference type="UCSC" id="Y43B11AR.4.1">
    <property type="organism name" value="c. elegans"/>
</dbReference>
<dbReference type="AGR" id="WB:WBGene00004473"/>
<dbReference type="CTD" id="177481"/>
<dbReference type="WormBase" id="Y43B11AR.4">
    <property type="protein sequence ID" value="CE24278"/>
    <property type="gene ID" value="WBGene00004473"/>
    <property type="gene designation" value="rps-4"/>
</dbReference>
<dbReference type="eggNOG" id="KOG0378">
    <property type="taxonomic scope" value="Eukaryota"/>
</dbReference>
<dbReference type="GeneTree" id="ENSGT00390000005569"/>
<dbReference type="HOGENOM" id="CLU_060400_1_0_1"/>
<dbReference type="InParanoid" id="Q9N3X2"/>
<dbReference type="OMA" id="GHIQLNL"/>
<dbReference type="OrthoDB" id="1109245at2759"/>
<dbReference type="PhylomeDB" id="Q9N3X2"/>
<dbReference type="Reactome" id="R-CEL-156827">
    <property type="pathway name" value="L13a-mediated translational silencing of Ceruloplasmin expression"/>
</dbReference>
<dbReference type="Reactome" id="R-CEL-1799339">
    <property type="pathway name" value="SRP-dependent cotranslational protein targeting to membrane"/>
</dbReference>
<dbReference type="Reactome" id="R-CEL-72649">
    <property type="pathway name" value="Translation initiation complex formation"/>
</dbReference>
<dbReference type="Reactome" id="R-CEL-72689">
    <property type="pathway name" value="Formation of a pool of free 40S subunits"/>
</dbReference>
<dbReference type="Reactome" id="R-CEL-72695">
    <property type="pathway name" value="Formation of the ternary complex, and subsequently, the 43S complex"/>
</dbReference>
<dbReference type="Reactome" id="R-CEL-72702">
    <property type="pathway name" value="Ribosomal scanning and start codon recognition"/>
</dbReference>
<dbReference type="Reactome" id="R-CEL-72706">
    <property type="pathway name" value="GTP hydrolysis and joining of the 60S ribosomal subunit"/>
</dbReference>
<dbReference type="Reactome" id="R-CEL-975956">
    <property type="pathway name" value="Nonsense Mediated Decay (NMD) independent of the Exon Junction Complex (EJC)"/>
</dbReference>
<dbReference type="Reactome" id="R-CEL-975957">
    <property type="pathway name" value="Nonsense Mediated Decay (NMD) enhanced by the Exon Junction Complex (EJC)"/>
</dbReference>
<dbReference type="PRO" id="PR:Q9N3X2"/>
<dbReference type="Proteomes" id="UP000001940">
    <property type="component" value="Chromosome IV"/>
</dbReference>
<dbReference type="Bgee" id="WBGene00004473">
    <property type="expression patterns" value="Expressed in germ line (C elegans) and 4 other cell types or tissues"/>
</dbReference>
<dbReference type="GO" id="GO:0022627">
    <property type="term" value="C:cytosolic small ribosomal subunit"/>
    <property type="evidence" value="ECO:0000318"/>
    <property type="project" value="GO_Central"/>
</dbReference>
<dbReference type="GO" id="GO:0003723">
    <property type="term" value="F:RNA binding"/>
    <property type="evidence" value="ECO:0000318"/>
    <property type="project" value="GO_Central"/>
</dbReference>
<dbReference type="GO" id="GO:0019843">
    <property type="term" value="F:rRNA binding"/>
    <property type="evidence" value="ECO:0007669"/>
    <property type="project" value="UniProtKB-KW"/>
</dbReference>
<dbReference type="GO" id="GO:0003735">
    <property type="term" value="F:structural constituent of ribosome"/>
    <property type="evidence" value="ECO:0000318"/>
    <property type="project" value="GO_Central"/>
</dbReference>
<dbReference type="GO" id="GO:0006412">
    <property type="term" value="P:translation"/>
    <property type="evidence" value="ECO:0000318"/>
    <property type="project" value="GO_Central"/>
</dbReference>
<dbReference type="CDD" id="cd06087">
    <property type="entry name" value="KOW_RPS4"/>
    <property type="match status" value="1"/>
</dbReference>
<dbReference type="FunFam" id="2.30.30.30:FF:000005">
    <property type="entry name" value="40S ribosomal protein S4"/>
    <property type="match status" value="1"/>
</dbReference>
<dbReference type="FunFam" id="2.40.50.740:FF:000001">
    <property type="entry name" value="40S ribosomal protein S4"/>
    <property type="match status" value="1"/>
</dbReference>
<dbReference type="FunFam" id="3.10.290.10:FF:000002">
    <property type="entry name" value="40S ribosomal protein S4"/>
    <property type="match status" value="1"/>
</dbReference>
<dbReference type="Gene3D" id="2.30.30.30">
    <property type="match status" value="1"/>
</dbReference>
<dbReference type="Gene3D" id="2.40.50.740">
    <property type="match status" value="1"/>
</dbReference>
<dbReference type="Gene3D" id="3.10.290.10">
    <property type="entry name" value="RNA-binding S4 domain"/>
    <property type="match status" value="1"/>
</dbReference>
<dbReference type="HAMAP" id="MF_00485">
    <property type="entry name" value="Ribosomal_eS4"/>
    <property type="match status" value="1"/>
</dbReference>
<dbReference type="InterPro" id="IPR014722">
    <property type="entry name" value="Rib_uL2_dom2"/>
</dbReference>
<dbReference type="InterPro" id="IPR000876">
    <property type="entry name" value="Ribosomal_eS4"/>
</dbReference>
<dbReference type="InterPro" id="IPR032277">
    <property type="entry name" value="Ribosomal_eS4_C"/>
</dbReference>
<dbReference type="InterPro" id="IPR013845">
    <property type="entry name" value="Ribosomal_eS4_central_region"/>
</dbReference>
<dbReference type="InterPro" id="IPR038237">
    <property type="entry name" value="Ribosomal_eS4_central_sf"/>
</dbReference>
<dbReference type="InterPro" id="IPR041982">
    <property type="entry name" value="Ribosomal_eS4_KOW"/>
</dbReference>
<dbReference type="InterPro" id="IPR013843">
    <property type="entry name" value="Ribosomal_eS4_N"/>
</dbReference>
<dbReference type="InterPro" id="IPR018199">
    <property type="entry name" value="Ribosomal_eS4_N_CS"/>
</dbReference>
<dbReference type="InterPro" id="IPR036986">
    <property type="entry name" value="S4_RNA-bd_sf"/>
</dbReference>
<dbReference type="NCBIfam" id="NF003312">
    <property type="entry name" value="PRK04313.1"/>
    <property type="match status" value="1"/>
</dbReference>
<dbReference type="PANTHER" id="PTHR11581">
    <property type="entry name" value="30S/40S RIBOSOMAL PROTEIN S4"/>
    <property type="match status" value="1"/>
</dbReference>
<dbReference type="PANTHER" id="PTHR11581:SF0">
    <property type="entry name" value="SMALL RIBOSOMAL SUBUNIT PROTEIN ES4"/>
    <property type="match status" value="1"/>
</dbReference>
<dbReference type="Pfam" id="PF16121">
    <property type="entry name" value="40S_S4_C"/>
    <property type="match status" value="1"/>
</dbReference>
<dbReference type="Pfam" id="PF00900">
    <property type="entry name" value="Ribosomal_S4e"/>
    <property type="match status" value="1"/>
</dbReference>
<dbReference type="Pfam" id="PF08071">
    <property type="entry name" value="RS4NT"/>
    <property type="match status" value="1"/>
</dbReference>
<dbReference type="PIRSF" id="PIRSF002116">
    <property type="entry name" value="Ribosomal_S4"/>
    <property type="match status" value="1"/>
</dbReference>
<dbReference type="PROSITE" id="PS00528">
    <property type="entry name" value="RIBOSOMAL_S4E"/>
    <property type="match status" value="1"/>
</dbReference>
<feature type="chain" id="PRO_0000130830" description="Small ribosomal subunit protein eS4">
    <location>
        <begin position="1"/>
        <end position="259"/>
    </location>
</feature>
<feature type="domain" description="S4 RNA-binding">
    <location>
        <begin position="41"/>
        <end position="100"/>
    </location>
</feature>
<accession>Q9N3X2</accession>
<protein>
    <recommendedName>
        <fullName evidence="2">Small ribosomal subunit protein eS4</fullName>
    </recommendedName>
    <alternativeName>
        <fullName>40S ribosomal protein S4</fullName>
    </alternativeName>
</protein>
<organism>
    <name type="scientific">Caenorhabditis elegans</name>
    <dbReference type="NCBI Taxonomy" id="6239"/>
    <lineage>
        <taxon>Eukaryota</taxon>
        <taxon>Metazoa</taxon>
        <taxon>Ecdysozoa</taxon>
        <taxon>Nematoda</taxon>
        <taxon>Chromadorea</taxon>
        <taxon>Rhabditida</taxon>
        <taxon>Rhabditina</taxon>
        <taxon>Rhabditomorpha</taxon>
        <taxon>Rhabditoidea</taxon>
        <taxon>Rhabditidae</taxon>
        <taxon>Peloderinae</taxon>
        <taxon>Caenorhabditis</taxon>
    </lineage>
</organism>
<evidence type="ECO:0000255" key="1"/>
<evidence type="ECO:0000305" key="2"/>
<reference key="1">
    <citation type="journal article" date="1998" name="Science">
        <title>Genome sequence of the nematode C. elegans: a platform for investigating biology.</title>
        <authorList>
            <consortium name="The C. elegans sequencing consortium"/>
        </authorList>
    </citation>
    <scope>NUCLEOTIDE SEQUENCE [LARGE SCALE GENOMIC DNA]</scope>
    <source>
        <strain>Bristol N2</strain>
    </source>
</reference>
<reference evidence="2" key="2">
    <citation type="submission" date="2005-09" db="UniProtKB">
        <authorList>
            <person name="Bienvenut W.V."/>
        </authorList>
    </citation>
    <scope>PROTEIN SEQUENCE OF 11-48; 53-61; 81-99; 113-121; 134-144; 155-167; 174-186; 191-229 AND 233-251</scope>
    <scope>IDENTIFICATION BY MASS SPECTROMETRY</scope>
</reference>